<reference key="1">
    <citation type="journal article" date="2001" name="Science">
        <title>The genome of the natural genetic engineer Agrobacterium tumefaciens C58.</title>
        <authorList>
            <person name="Wood D.W."/>
            <person name="Setubal J.C."/>
            <person name="Kaul R."/>
            <person name="Monks D.E."/>
            <person name="Kitajima J.P."/>
            <person name="Okura V.K."/>
            <person name="Zhou Y."/>
            <person name="Chen L."/>
            <person name="Wood G.E."/>
            <person name="Almeida N.F. Jr."/>
            <person name="Woo L."/>
            <person name="Chen Y."/>
            <person name="Paulsen I.T."/>
            <person name="Eisen J.A."/>
            <person name="Karp P.D."/>
            <person name="Bovee D. Sr."/>
            <person name="Chapman P."/>
            <person name="Clendenning J."/>
            <person name="Deatherage G."/>
            <person name="Gillet W."/>
            <person name="Grant C."/>
            <person name="Kutyavin T."/>
            <person name="Levy R."/>
            <person name="Li M.-J."/>
            <person name="McClelland E."/>
            <person name="Palmieri A."/>
            <person name="Raymond C."/>
            <person name="Rouse G."/>
            <person name="Saenphimmachak C."/>
            <person name="Wu Z."/>
            <person name="Romero P."/>
            <person name="Gordon D."/>
            <person name="Zhang S."/>
            <person name="Yoo H."/>
            <person name="Tao Y."/>
            <person name="Biddle P."/>
            <person name="Jung M."/>
            <person name="Krespan W."/>
            <person name="Perry M."/>
            <person name="Gordon-Kamm B."/>
            <person name="Liao L."/>
            <person name="Kim S."/>
            <person name="Hendrick C."/>
            <person name="Zhao Z.-Y."/>
            <person name="Dolan M."/>
            <person name="Chumley F."/>
            <person name="Tingey S.V."/>
            <person name="Tomb J.-F."/>
            <person name="Gordon M.P."/>
            <person name="Olson M.V."/>
            <person name="Nester E.W."/>
        </authorList>
    </citation>
    <scope>NUCLEOTIDE SEQUENCE [LARGE SCALE GENOMIC DNA]</scope>
    <source>
        <strain>C58 / ATCC 33970</strain>
    </source>
</reference>
<reference key="2">
    <citation type="journal article" date="2001" name="Science">
        <title>Genome sequence of the plant pathogen and biotechnology agent Agrobacterium tumefaciens C58.</title>
        <authorList>
            <person name="Goodner B."/>
            <person name="Hinkle G."/>
            <person name="Gattung S."/>
            <person name="Miller N."/>
            <person name="Blanchard M."/>
            <person name="Qurollo B."/>
            <person name="Goldman B.S."/>
            <person name="Cao Y."/>
            <person name="Askenazi M."/>
            <person name="Halling C."/>
            <person name="Mullin L."/>
            <person name="Houmiel K."/>
            <person name="Gordon J."/>
            <person name="Vaudin M."/>
            <person name="Iartchouk O."/>
            <person name="Epp A."/>
            <person name="Liu F."/>
            <person name="Wollam C."/>
            <person name="Allinger M."/>
            <person name="Doughty D."/>
            <person name="Scott C."/>
            <person name="Lappas C."/>
            <person name="Markelz B."/>
            <person name="Flanagan C."/>
            <person name="Crowell C."/>
            <person name="Gurson J."/>
            <person name="Lomo C."/>
            <person name="Sear C."/>
            <person name="Strub G."/>
            <person name="Cielo C."/>
            <person name="Slater S."/>
        </authorList>
    </citation>
    <scope>NUCLEOTIDE SEQUENCE [LARGE SCALE GENOMIC DNA]</scope>
    <source>
        <strain>C58 / ATCC 33970</strain>
    </source>
</reference>
<gene>
    <name evidence="1" type="primary">psd</name>
    <name type="ordered locus">Atu1063</name>
    <name type="ORF">AGR_C_1963</name>
</gene>
<keyword id="KW-1003">Cell membrane</keyword>
<keyword id="KW-0210">Decarboxylase</keyword>
<keyword id="KW-0444">Lipid biosynthesis</keyword>
<keyword id="KW-0443">Lipid metabolism</keyword>
<keyword id="KW-0456">Lyase</keyword>
<keyword id="KW-0472">Membrane</keyword>
<keyword id="KW-0594">Phospholipid biosynthesis</keyword>
<keyword id="KW-1208">Phospholipid metabolism</keyword>
<keyword id="KW-0670">Pyruvate</keyword>
<keyword id="KW-1185">Reference proteome</keyword>
<keyword id="KW-0865">Zymogen</keyword>
<proteinExistence type="inferred from homology"/>
<comment type="function">
    <text evidence="1">Catalyzes the formation of phosphatidylethanolamine (PtdEtn) from phosphatidylserine (PtdSer).</text>
</comment>
<comment type="catalytic activity">
    <reaction evidence="1">
        <text>a 1,2-diacyl-sn-glycero-3-phospho-L-serine + H(+) = a 1,2-diacyl-sn-glycero-3-phosphoethanolamine + CO2</text>
        <dbReference type="Rhea" id="RHEA:20828"/>
        <dbReference type="ChEBI" id="CHEBI:15378"/>
        <dbReference type="ChEBI" id="CHEBI:16526"/>
        <dbReference type="ChEBI" id="CHEBI:57262"/>
        <dbReference type="ChEBI" id="CHEBI:64612"/>
        <dbReference type="EC" id="4.1.1.65"/>
    </reaction>
</comment>
<comment type="cofactor">
    <cofactor evidence="1">
        <name>pyruvate</name>
        <dbReference type="ChEBI" id="CHEBI:15361"/>
    </cofactor>
    <text evidence="1">Binds 1 pyruvoyl group covalently per subunit.</text>
</comment>
<comment type="pathway">
    <text evidence="1">Phospholipid metabolism; phosphatidylethanolamine biosynthesis; phosphatidylethanolamine from CDP-diacylglycerol: step 2/2.</text>
</comment>
<comment type="subunit">
    <text evidence="1">Heterodimer of a large membrane-associated beta subunit and a small pyruvoyl-containing alpha subunit.</text>
</comment>
<comment type="subcellular location">
    <subcellularLocation>
        <location evidence="1">Cell membrane</location>
        <topology evidence="1">Peripheral membrane protein</topology>
    </subcellularLocation>
</comment>
<comment type="PTM">
    <text evidence="1">Is synthesized initially as an inactive proenzyme. Formation of the active enzyme involves a self-maturation process in which the active site pyruvoyl group is generated from an internal serine residue via an autocatalytic post-translational modification. Two non-identical subunits are generated from the proenzyme in this reaction, and the pyruvate is formed at the N-terminus of the alpha chain, which is derived from the carboxyl end of the proenzyme. The post-translation cleavage follows an unusual pathway, termed non-hydrolytic serinolysis, in which the side chain hydroxyl group of the serine supplies its oxygen atom to form the C-terminus of the beta chain, while the remainder of the serine residue undergoes an oxidative deamination to produce ammonia and the pyruvoyl prosthetic group on the alpha chain.</text>
</comment>
<comment type="similarity">
    <text evidence="1">Belongs to the phosphatidylserine decarboxylase family. PSD-A subfamily.</text>
</comment>
<evidence type="ECO:0000255" key="1">
    <source>
        <dbReference type="HAMAP-Rule" id="MF_00664"/>
    </source>
</evidence>
<feature type="chain" id="PRO_0000029747" description="Phosphatidylserine decarboxylase beta chain" evidence="1">
    <location>
        <begin position="1"/>
        <end position="189"/>
    </location>
</feature>
<feature type="chain" id="PRO_0000029748" description="Phosphatidylserine decarboxylase alpha chain" evidence="1">
    <location>
        <begin position="190"/>
        <end position="232"/>
    </location>
</feature>
<feature type="active site" description="Schiff-base intermediate with substrate; via pyruvic acid" evidence="1">
    <location>
        <position position="190"/>
    </location>
</feature>
<feature type="site" description="Cleavage (non-hydrolytic); by autocatalysis" evidence="1">
    <location>
        <begin position="189"/>
        <end position="190"/>
    </location>
</feature>
<feature type="modified residue" description="Pyruvic acid (Ser); by autocatalysis" evidence="1">
    <location>
        <position position="190"/>
    </location>
</feature>
<name>PSD_AGRFC</name>
<dbReference type="EC" id="4.1.1.65" evidence="1"/>
<dbReference type="EMBL" id="AE007869">
    <property type="protein sequence ID" value="AAK86872.2"/>
    <property type="molecule type" value="Genomic_DNA"/>
</dbReference>
<dbReference type="PIR" id="AF2707">
    <property type="entry name" value="AF2707"/>
</dbReference>
<dbReference type="PIR" id="G97489">
    <property type="entry name" value="G97489"/>
</dbReference>
<dbReference type="RefSeq" id="NP_354087.2">
    <property type="nucleotide sequence ID" value="NC_003062.2"/>
</dbReference>
<dbReference type="RefSeq" id="WP_010971370.1">
    <property type="nucleotide sequence ID" value="NC_003062.2"/>
</dbReference>
<dbReference type="SMR" id="Q8UGH4"/>
<dbReference type="STRING" id="176299.Atu1063"/>
<dbReference type="EnsemblBacteria" id="AAK86872">
    <property type="protein sequence ID" value="AAK86872"/>
    <property type="gene ID" value="Atu1063"/>
</dbReference>
<dbReference type="GeneID" id="1133101"/>
<dbReference type="KEGG" id="atu:Atu1063"/>
<dbReference type="PATRIC" id="fig|176299.10.peg.1076"/>
<dbReference type="eggNOG" id="COG0688">
    <property type="taxonomic scope" value="Bacteria"/>
</dbReference>
<dbReference type="HOGENOM" id="CLU_072492_0_0_5"/>
<dbReference type="OrthoDB" id="9790893at2"/>
<dbReference type="PhylomeDB" id="Q8UGH4"/>
<dbReference type="BioCyc" id="AGRO:ATU1063-MONOMER"/>
<dbReference type="UniPathway" id="UPA00558">
    <property type="reaction ID" value="UER00616"/>
</dbReference>
<dbReference type="Proteomes" id="UP000000813">
    <property type="component" value="Chromosome circular"/>
</dbReference>
<dbReference type="GO" id="GO:0005886">
    <property type="term" value="C:plasma membrane"/>
    <property type="evidence" value="ECO:0007669"/>
    <property type="project" value="UniProtKB-SubCell"/>
</dbReference>
<dbReference type="GO" id="GO:0004609">
    <property type="term" value="F:phosphatidylserine decarboxylase activity"/>
    <property type="evidence" value="ECO:0007669"/>
    <property type="project" value="UniProtKB-UniRule"/>
</dbReference>
<dbReference type="GO" id="GO:0006646">
    <property type="term" value="P:phosphatidylethanolamine biosynthetic process"/>
    <property type="evidence" value="ECO:0007669"/>
    <property type="project" value="UniProtKB-UniRule"/>
</dbReference>
<dbReference type="HAMAP" id="MF_00664">
    <property type="entry name" value="PS_decarb_PSD_A"/>
    <property type="match status" value="1"/>
</dbReference>
<dbReference type="InterPro" id="IPR003817">
    <property type="entry name" value="PS_Dcarbxylase"/>
</dbReference>
<dbReference type="InterPro" id="IPR033175">
    <property type="entry name" value="PSD-A"/>
</dbReference>
<dbReference type="NCBIfam" id="NF003677">
    <property type="entry name" value="PRK05305.1-1"/>
    <property type="match status" value="1"/>
</dbReference>
<dbReference type="NCBIfam" id="NF003678">
    <property type="entry name" value="PRK05305.1-2"/>
    <property type="match status" value="1"/>
</dbReference>
<dbReference type="NCBIfam" id="NF003679">
    <property type="entry name" value="PRK05305.1-3"/>
    <property type="match status" value="1"/>
</dbReference>
<dbReference type="NCBIfam" id="NF003685">
    <property type="entry name" value="PRK05305.2-5"/>
    <property type="match status" value="1"/>
</dbReference>
<dbReference type="PANTHER" id="PTHR35809">
    <property type="entry name" value="ARCHAETIDYLSERINE DECARBOXYLASE PROENZYME-RELATED"/>
    <property type="match status" value="1"/>
</dbReference>
<dbReference type="PANTHER" id="PTHR35809:SF1">
    <property type="entry name" value="ARCHAETIDYLSERINE DECARBOXYLASE PROENZYME-RELATED"/>
    <property type="match status" value="1"/>
</dbReference>
<dbReference type="Pfam" id="PF02666">
    <property type="entry name" value="PS_Dcarbxylase"/>
    <property type="match status" value="1"/>
</dbReference>
<organism>
    <name type="scientific">Agrobacterium fabrum (strain C58 / ATCC 33970)</name>
    <name type="common">Agrobacterium tumefaciens (strain C58)</name>
    <dbReference type="NCBI Taxonomy" id="176299"/>
    <lineage>
        <taxon>Bacteria</taxon>
        <taxon>Pseudomonadati</taxon>
        <taxon>Pseudomonadota</taxon>
        <taxon>Alphaproteobacteria</taxon>
        <taxon>Hyphomicrobiales</taxon>
        <taxon>Rhizobiaceae</taxon>
        <taxon>Rhizobium/Agrobacterium group</taxon>
        <taxon>Agrobacterium</taxon>
        <taxon>Agrobacterium tumefaciens complex</taxon>
    </lineage>
</organism>
<protein>
    <recommendedName>
        <fullName evidence="1">Phosphatidylserine decarboxylase proenzyme</fullName>
        <ecNumber evidence="1">4.1.1.65</ecNumber>
    </recommendedName>
    <component>
        <recommendedName>
            <fullName evidence="1">Phosphatidylserine decarboxylase alpha chain</fullName>
        </recommendedName>
    </component>
    <component>
        <recommendedName>
            <fullName evidence="1">Phosphatidylserine decarboxylase beta chain</fullName>
        </recommendedName>
    </component>
</protein>
<accession>Q8UGH4</accession>
<sequence length="232" mass="25478">MNLFDTIRNTIVPIHKEGYVFVAAFFVASLVLGWIAEPLFWVGLVLTAWCAYFFRDPERVTPQDDDLIISPADGKVSAVQSVVPPLELELGKEPMVRISVFMNVFNCHVNRAPVRGRIVNVAYRPGLFLNAEVDKASEDNERNGLVIETSHGKVGVVQIAGMVARRIVCWVKPNEPVDAGERFGLIRFGSRLDIFLPAGFEPRVSVGQTAIAGETVLAEFGSAKGPVLSRRG</sequence>